<dbReference type="EMBL" id="U83112">
    <property type="protein sequence ID" value="AAC63594.1"/>
    <property type="molecule type" value="mRNA"/>
</dbReference>
<dbReference type="SMR" id="P97691"/>
<dbReference type="FunCoup" id="P97691">
    <property type="interactions" value="389"/>
</dbReference>
<dbReference type="STRING" id="10116.ENSRNOP00000008003"/>
<dbReference type="GlyGen" id="P97691">
    <property type="glycosylation" value="1 site"/>
</dbReference>
<dbReference type="PhosphoSitePlus" id="P97691"/>
<dbReference type="PaxDb" id="10116-ENSRNOP00000008003"/>
<dbReference type="UCSC" id="RGD:61807">
    <molecule id="P97691-1"/>
    <property type="organism name" value="rat"/>
</dbReference>
<dbReference type="AGR" id="RGD:61807"/>
<dbReference type="RGD" id="61807">
    <property type="gene designation" value="Foxm1"/>
</dbReference>
<dbReference type="eggNOG" id="KOG2294">
    <property type="taxonomic scope" value="Eukaryota"/>
</dbReference>
<dbReference type="InParanoid" id="P97691"/>
<dbReference type="Reactome" id="R-RNO-156711">
    <property type="pathway name" value="Polo-like kinase mediated events"/>
</dbReference>
<dbReference type="Reactome" id="R-RNO-69273">
    <property type="pathway name" value="Cyclin A/B1/B2 associated events during G2/M transition"/>
</dbReference>
<dbReference type="PRO" id="PR:P97691"/>
<dbReference type="Proteomes" id="UP000002494">
    <property type="component" value="Unplaced"/>
</dbReference>
<dbReference type="GO" id="GO:0005634">
    <property type="term" value="C:nucleus"/>
    <property type="evidence" value="ECO:0000266"/>
    <property type="project" value="RGD"/>
</dbReference>
<dbReference type="GO" id="GO:0003677">
    <property type="term" value="F:DNA binding"/>
    <property type="evidence" value="ECO:0000314"/>
    <property type="project" value="UniProtKB"/>
</dbReference>
<dbReference type="GO" id="GO:0003700">
    <property type="term" value="F:DNA-binding transcription factor activity"/>
    <property type="evidence" value="ECO:0000250"/>
    <property type="project" value="UniProtKB"/>
</dbReference>
<dbReference type="GO" id="GO:0019901">
    <property type="term" value="F:protein kinase binding"/>
    <property type="evidence" value="ECO:0000266"/>
    <property type="project" value="RGD"/>
</dbReference>
<dbReference type="GO" id="GO:0000977">
    <property type="term" value="F:RNA polymerase II transcription regulatory region sequence-specific DNA binding"/>
    <property type="evidence" value="ECO:0000266"/>
    <property type="project" value="RGD"/>
</dbReference>
<dbReference type="GO" id="GO:0043565">
    <property type="term" value="F:sequence-specific DNA binding"/>
    <property type="evidence" value="ECO:0000314"/>
    <property type="project" value="RGD"/>
</dbReference>
<dbReference type="GO" id="GO:0000976">
    <property type="term" value="F:transcription cis-regulatory region binding"/>
    <property type="evidence" value="ECO:0000266"/>
    <property type="project" value="RGD"/>
</dbReference>
<dbReference type="GO" id="GO:0008283">
    <property type="term" value="P:cell population proliferation"/>
    <property type="evidence" value="ECO:0000266"/>
    <property type="project" value="RGD"/>
</dbReference>
<dbReference type="GO" id="GO:0030330">
    <property type="term" value="P:DNA damage response, signal transduction by p53 class mediator"/>
    <property type="evidence" value="ECO:0000266"/>
    <property type="project" value="RGD"/>
</dbReference>
<dbReference type="GO" id="GO:0006281">
    <property type="term" value="P:DNA repair"/>
    <property type="evidence" value="ECO:0007669"/>
    <property type="project" value="UniProtKB-KW"/>
</dbReference>
<dbReference type="GO" id="GO:0000086">
    <property type="term" value="P:G2/M transition of mitotic cell cycle"/>
    <property type="evidence" value="ECO:0000250"/>
    <property type="project" value="UniProtKB"/>
</dbReference>
<dbReference type="GO" id="GO:0001889">
    <property type="term" value="P:liver development"/>
    <property type="evidence" value="ECO:0000266"/>
    <property type="project" value="RGD"/>
</dbReference>
<dbReference type="GO" id="GO:0045892">
    <property type="term" value="P:negative regulation of DNA-templated transcription"/>
    <property type="evidence" value="ECO:0000266"/>
    <property type="project" value="RGD"/>
</dbReference>
<dbReference type="GO" id="GO:0032873">
    <property type="term" value="P:negative regulation of stress-activated MAPK cascade"/>
    <property type="evidence" value="ECO:0000266"/>
    <property type="project" value="RGD"/>
</dbReference>
<dbReference type="GO" id="GO:0000122">
    <property type="term" value="P:negative regulation of transcription by RNA polymerase II"/>
    <property type="evidence" value="ECO:0000266"/>
    <property type="project" value="RGD"/>
</dbReference>
<dbReference type="GO" id="GO:0008284">
    <property type="term" value="P:positive regulation of cell population proliferation"/>
    <property type="evidence" value="ECO:0000266"/>
    <property type="project" value="RGD"/>
</dbReference>
<dbReference type="GO" id="GO:0045893">
    <property type="term" value="P:positive regulation of DNA-templated transcription"/>
    <property type="evidence" value="ECO:0000266"/>
    <property type="project" value="RGD"/>
</dbReference>
<dbReference type="GO" id="GO:2000781">
    <property type="term" value="P:positive regulation of double-strand break repair"/>
    <property type="evidence" value="ECO:0000266"/>
    <property type="project" value="RGD"/>
</dbReference>
<dbReference type="GO" id="GO:2000648">
    <property type="term" value="P:positive regulation of stem cell proliferation"/>
    <property type="evidence" value="ECO:0000266"/>
    <property type="project" value="RGD"/>
</dbReference>
<dbReference type="GO" id="GO:0045944">
    <property type="term" value="P:positive regulation of transcription by RNA polymerase II"/>
    <property type="evidence" value="ECO:0000250"/>
    <property type="project" value="UniProtKB"/>
</dbReference>
<dbReference type="GO" id="GO:0051726">
    <property type="term" value="P:regulation of cell cycle"/>
    <property type="evidence" value="ECO:0000266"/>
    <property type="project" value="RGD"/>
</dbReference>
<dbReference type="GO" id="GO:0042127">
    <property type="term" value="P:regulation of cell population proliferation"/>
    <property type="evidence" value="ECO:0000266"/>
    <property type="project" value="RGD"/>
</dbReference>
<dbReference type="GO" id="GO:0046578">
    <property type="term" value="P:regulation of Ras protein signal transduction"/>
    <property type="evidence" value="ECO:0000266"/>
    <property type="project" value="RGD"/>
</dbReference>
<dbReference type="GO" id="GO:2000377">
    <property type="term" value="P:regulation of reactive oxygen species metabolic process"/>
    <property type="evidence" value="ECO:0000266"/>
    <property type="project" value="RGD"/>
</dbReference>
<dbReference type="GO" id="GO:0006357">
    <property type="term" value="P:regulation of transcription by RNA polymerase II"/>
    <property type="evidence" value="ECO:0000318"/>
    <property type="project" value="GO_Central"/>
</dbReference>
<dbReference type="GO" id="GO:0051591">
    <property type="term" value="P:response to cAMP"/>
    <property type="evidence" value="ECO:0000270"/>
    <property type="project" value="RGD"/>
</dbReference>
<dbReference type="GO" id="GO:0034698">
    <property type="term" value="P:response to gonadotropin"/>
    <property type="evidence" value="ECO:0000270"/>
    <property type="project" value="RGD"/>
</dbReference>
<dbReference type="GO" id="GO:0072089">
    <property type="term" value="P:stem cell proliferation"/>
    <property type="evidence" value="ECO:0000266"/>
    <property type="project" value="RGD"/>
</dbReference>
<dbReference type="GO" id="GO:0001570">
    <property type="term" value="P:vasculogenesis"/>
    <property type="evidence" value="ECO:0000266"/>
    <property type="project" value="RGD"/>
</dbReference>
<dbReference type="CDD" id="cd20029">
    <property type="entry name" value="FH_FOXM"/>
    <property type="match status" value="1"/>
</dbReference>
<dbReference type="FunFam" id="1.10.10.10:FF:000245">
    <property type="entry name" value="forkhead box protein M1 isoform X2"/>
    <property type="match status" value="1"/>
</dbReference>
<dbReference type="Gene3D" id="1.10.10.10">
    <property type="entry name" value="Winged helix-like DNA-binding domain superfamily/Winged helix DNA-binding domain"/>
    <property type="match status" value="1"/>
</dbReference>
<dbReference type="InterPro" id="IPR047516">
    <property type="entry name" value="FH_FOXM1"/>
</dbReference>
<dbReference type="InterPro" id="IPR001766">
    <property type="entry name" value="Fork_head_dom"/>
</dbReference>
<dbReference type="InterPro" id="IPR042839">
    <property type="entry name" value="FOXM1"/>
</dbReference>
<dbReference type="InterPro" id="IPR018122">
    <property type="entry name" value="TF_fork_head_CS_1"/>
</dbReference>
<dbReference type="InterPro" id="IPR030456">
    <property type="entry name" value="TF_fork_head_CS_2"/>
</dbReference>
<dbReference type="InterPro" id="IPR036388">
    <property type="entry name" value="WH-like_DNA-bd_sf"/>
</dbReference>
<dbReference type="InterPro" id="IPR036390">
    <property type="entry name" value="WH_DNA-bd_sf"/>
</dbReference>
<dbReference type="PANTHER" id="PTHR46878">
    <property type="entry name" value="FORKHEAD BOX PROTEIN M1"/>
    <property type="match status" value="1"/>
</dbReference>
<dbReference type="PANTHER" id="PTHR46878:SF1">
    <property type="entry name" value="FORKHEAD BOX PROTEIN M1"/>
    <property type="match status" value="1"/>
</dbReference>
<dbReference type="Pfam" id="PF00250">
    <property type="entry name" value="Forkhead"/>
    <property type="match status" value="1"/>
</dbReference>
<dbReference type="PRINTS" id="PR00053">
    <property type="entry name" value="FORKHEAD"/>
</dbReference>
<dbReference type="SMART" id="SM00339">
    <property type="entry name" value="FH"/>
    <property type="match status" value="1"/>
</dbReference>
<dbReference type="SUPFAM" id="SSF46785">
    <property type="entry name" value="Winged helix' DNA-binding domain"/>
    <property type="match status" value="1"/>
</dbReference>
<dbReference type="PROSITE" id="PS00657">
    <property type="entry name" value="FORK_HEAD_1"/>
    <property type="match status" value="1"/>
</dbReference>
<dbReference type="PROSITE" id="PS00658">
    <property type="entry name" value="FORK_HEAD_2"/>
    <property type="match status" value="1"/>
</dbReference>
<dbReference type="PROSITE" id="PS50039">
    <property type="entry name" value="FORK_HEAD_3"/>
    <property type="match status" value="1"/>
</dbReference>
<keyword id="KW-0010">Activator</keyword>
<keyword id="KW-0025">Alternative splicing</keyword>
<keyword id="KW-0131">Cell cycle</keyword>
<keyword id="KW-0227">DNA damage</keyword>
<keyword id="KW-0234">DNA repair</keyword>
<keyword id="KW-0238">DNA-binding</keyword>
<keyword id="KW-1017">Isopeptide bond</keyword>
<keyword id="KW-0539">Nucleus</keyword>
<keyword id="KW-0597">Phosphoprotein</keyword>
<keyword id="KW-1185">Reference proteome</keyword>
<keyword id="KW-0804">Transcription</keyword>
<keyword id="KW-0805">Transcription regulation</keyword>
<keyword id="KW-0832">Ubl conjugation</keyword>
<comment type="function">
    <text evidence="1">Transcription factor regulating the expression of cell cycle genes essential for DNA replication and mitosis. Plays a role in the control of cell proliferation. Also plays a role in DNA break repair, participating in the DNA damage checkpoint response. Promotes transcription of PHB2.</text>
</comment>
<comment type="subcellular location">
    <subcellularLocation>
        <location evidence="2">Nucleus</location>
    </subcellularLocation>
</comment>
<comment type="alternative products">
    <event type="alternative splicing"/>
    <isoform>
        <id>P97691-1</id>
        <name>1</name>
        <sequence type="displayed"/>
    </isoform>
    <isoform>
        <id>P97691-2</id>
        <name>2</name>
        <sequence type="described" ref="VSP_001550"/>
    </isoform>
    <isoform>
        <id>P97691-3</id>
        <name>3</name>
        <sequence type="described" ref="VSP_001549"/>
    </isoform>
    <isoform>
        <id>P97691-4</id>
        <name>4</name>
        <sequence type="not described"/>
    </isoform>
</comment>
<comment type="tissue specificity">
    <text>Highly expressed in thymus and testis, but weakly in intestine and lung. Appears to be expressed only in adult organs containing proliferating/cycling cells or in response to growth factors.</text>
</comment>
<comment type="developmental stage">
    <text>Expressed from 12 dpc to neonate in developing pancreas. Also expressed at 14 dpc in liver, thymus, testis and fat (pregnant mother).</text>
</comment>
<comment type="induction">
    <text>Activated in S phase.</text>
</comment>
<comment type="PTM">
    <text evidence="1">Phosphorylated in M (mitotic) phase. Phosphorylation by the checkpoint kinase CHEK2 in response to DNA damage increases the FOXM1 protein stability probably stimulating the transcription of genes involved in DNA repair. Phosphorylated by CDK1 in late S and G2 phases, creating docking sites for the POLO box domains of PLK1. Subsequently, PLK1 binds and phosphorylates FOXM1, leading to activation of transcriptional activity and subsequent enhanced expression of key mitotic regulators (By similarity). Phosphorylated by GSK3B leading to ubiquitination and proteasomal degradation (By similarity).</text>
</comment>
<comment type="miscellaneous">
    <molecule>Isoform 4</molecule>
    <text evidence="5">Has been shown to exist only in human so far.</text>
</comment>
<sequence length="759" mass="83672">MRTSPRRPLILKRRRLPLPIQNAPSETSEEEAKRSPGQQEPTQAQASQDVAESSSCKFPAGIKIINHPTVPNTQVVAIPNNADIQSIITALTAKGKESGSSGPNKFILISSGGASSHPPDPQSQAQTSTDSKRTELITETLGPKPGAKGVPVPKPPGALPRQRQESCGGEAAGCTLDNSLTNIQWLGKMSSDGLGRCSIKQELEEKENCHLEQNRVKVEAPSRASVSWQDSVSERPPYSYMAMIQFAINSTERKRMTLKDIYTWIEDHFPYFKHIAKPGWKNSIRHNLSLHDMFVRETSANGKVSFWTIHPSANRYLTLDQVFKPLEPGSPQSPEHLESQQKRPNPELRRNVTIKTELPLGARRKMKPLLPRVSSYLVPIQFPVNQSLVLQPSVKVPLPLAASLMSSELARHSKRVRIAPKVLLSNEGIAPLPATEPMKEEKPLLGEGLLPLLPIQSIKEEVIQPGEDIPHLERPIKVESPPLEEWPSPCASVKEELSNSWEDSSCSPTPKPKKSYCGLKSPTRCVSEMLVTKRREKREVSRSRRKQHLQPPCLDEPELFFSEDSSTFRPAMEILAESSEPAPQLSCPQEEGGPFKTPIKETLPVSSTPSKSVLSRDPESWRLTPPAKVGGLDFSPVRTPQGAFGPLPDSLGLMELNTTPLKSVPLFDSPRELLNSEAFDLASDPFSSSPPPHLEAKPGSPELQVPSLSANRSLTEGLVLDTMNDSLSKILLDISFPGLEEDPLGPDNINWSQFIPELR</sequence>
<feature type="chain" id="PRO_0000091865" description="Forkhead box protein M1">
    <location>
        <begin position="1"/>
        <end position="759"/>
    </location>
</feature>
<feature type="DNA-binding region" description="Fork-head" evidence="2">
    <location>
        <begin position="234"/>
        <end position="326"/>
    </location>
</feature>
<feature type="region of interest" description="Disordered" evidence="3">
    <location>
        <begin position="1"/>
        <end position="54"/>
    </location>
</feature>
<feature type="region of interest" description="Disordered" evidence="3">
    <location>
        <begin position="94"/>
        <end position="165"/>
    </location>
</feature>
<feature type="region of interest" description="Disordered" evidence="3">
    <location>
        <begin position="328"/>
        <end position="349"/>
    </location>
</feature>
<feature type="region of interest" description="Disordered" evidence="3">
    <location>
        <begin position="530"/>
        <end position="556"/>
    </location>
</feature>
<feature type="region of interest" description="Disordered" evidence="3">
    <location>
        <begin position="572"/>
        <end position="643"/>
    </location>
</feature>
<feature type="region of interest" description="Disordered" evidence="3">
    <location>
        <begin position="681"/>
        <end position="706"/>
    </location>
</feature>
<feature type="compositionally biased region" description="Polar residues" evidence="3">
    <location>
        <begin position="36"/>
        <end position="54"/>
    </location>
</feature>
<feature type="compositionally biased region" description="Low complexity" evidence="3">
    <location>
        <begin position="141"/>
        <end position="151"/>
    </location>
</feature>
<feature type="compositionally biased region" description="Basic and acidic residues" evidence="3">
    <location>
        <begin position="335"/>
        <end position="349"/>
    </location>
</feature>
<feature type="compositionally biased region" description="Basic and acidic residues" evidence="3">
    <location>
        <begin position="531"/>
        <end position="542"/>
    </location>
</feature>
<feature type="compositionally biased region" description="Polar residues" evidence="3">
    <location>
        <begin position="604"/>
        <end position="613"/>
    </location>
</feature>
<feature type="modified residue" description="Phosphoserine" evidence="1">
    <location>
        <position position="330"/>
    </location>
</feature>
<feature type="modified residue" description="Phosphoserine; by CHEK2" evidence="1">
    <location>
        <position position="375"/>
    </location>
</feature>
<feature type="modified residue" description="Phosphoserine" evidence="1">
    <location>
        <position position="521"/>
    </location>
</feature>
<feature type="modified residue" description="Phosphothreonine; by CDK1" evidence="1">
    <location>
        <position position="608"/>
    </location>
</feature>
<feature type="modified residue" description="Phosphothreonine" evidence="1">
    <location>
        <position position="624"/>
    </location>
</feature>
<feature type="modified residue" description="Phosphoserine; by PLK1" evidence="1">
    <location>
        <position position="726"/>
    </location>
</feature>
<feature type="modified residue" description="Phosphoserine; by PLK1" evidence="1">
    <location>
        <position position="735"/>
    </location>
</feature>
<feature type="cross-link" description="Glycyl lysine isopeptide (Lys-Gly) (interchain with G-Cter in SUMO2)" evidence="1">
    <location>
        <position position="200"/>
    </location>
</feature>
<feature type="cross-link" description="Glycyl lysine isopeptide (Lys-Gly) (interchain with G-Cter in SUMO2)" evidence="1">
    <location>
        <position position="324"/>
    </location>
</feature>
<feature type="cross-link" description="Glycyl lysine isopeptide (Lys-Gly) (interchain with G-Cter in SUMO2)" evidence="1">
    <location>
        <position position="355"/>
    </location>
</feature>
<feature type="cross-link" description="Glycyl lysine isopeptide (Lys-Gly) (interchain with G-Cter in SUMO2)" evidence="1">
    <location>
        <position position="421"/>
    </location>
</feature>
<feature type="cross-link" description="Glycyl lysine isopeptide (Lys-Gly) (interchain with G-Cter in SUMO2)" evidence="1">
    <location>
        <position position="439"/>
    </location>
</feature>
<feature type="splice variant" id="VSP_001549" description="In isoform 3." evidence="4">
    <original>K</original>
    <variation>KCWHQAYHKLGPQ</variation>
    <location>
        <position position="281"/>
    </location>
</feature>
<feature type="splice variant" id="VSP_001550" description="In isoform 2." evidence="4">
    <location>
        <begin position="325"/>
        <end position="339"/>
    </location>
</feature>
<name>FOXM1_RAT</name>
<accession>P97691</accession>
<evidence type="ECO:0000250" key="1">
    <source>
        <dbReference type="UniProtKB" id="Q08050"/>
    </source>
</evidence>
<evidence type="ECO:0000255" key="2">
    <source>
        <dbReference type="PROSITE-ProRule" id="PRU00089"/>
    </source>
</evidence>
<evidence type="ECO:0000256" key="3">
    <source>
        <dbReference type="SAM" id="MobiDB-lite"/>
    </source>
</evidence>
<evidence type="ECO:0000303" key="4">
    <source>
    </source>
</evidence>
<evidence type="ECO:0000305" key="5"/>
<proteinExistence type="evidence at transcript level"/>
<reference key="1">
    <citation type="journal article" date="1997" name="J. Biol. Chem.">
        <title>Molecular analysis of a novel winged helix protein, WIN. Expression pattern, DNA binding property, and alternative splicing within the DNA binding domain.</title>
        <authorList>
            <person name="Yao K.-M."/>
            <person name="Sha M."/>
            <person name="Lu Z."/>
            <person name="Wong G.G."/>
        </authorList>
    </citation>
    <scope>NUCLEOTIDE SEQUENCE [MRNA] (ISOFORMS 1; 2; 3 AND 4)</scope>
    <source>
        <tissue>Insulinoma</tissue>
    </source>
</reference>
<gene>
    <name type="primary">Foxm1</name>
    <name type="synonym">Win</name>
</gene>
<protein>
    <recommendedName>
        <fullName>Forkhead box protein M1</fullName>
    </recommendedName>
    <alternativeName>
        <fullName>INS-1 winged helix</fullName>
    </alternativeName>
    <alternativeName>
        <fullName>Winged-helix factor from INS-1 cells</fullName>
    </alternativeName>
</protein>
<organism>
    <name type="scientific">Rattus norvegicus</name>
    <name type="common">Rat</name>
    <dbReference type="NCBI Taxonomy" id="10116"/>
    <lineage>
        <taxon>Eukaryota</taxon>
        <taxon>Metazoa</taxon>
        <taxon>Chordata</taxon>
        <taxon>Craniata</taxon>
        <taxon>Vertebrata</taxon>
        <taxon>Euteleostomi</taxon>
        <taxon>Mammalia</taxon>
        <taxon>Eutheria</taxon>
        <taxon>Euarchontoglires</taxon>
        <taxon>Glires</taxon>
        <taxon>Rodentia</taxon>
        <taxon>Myomorpha</taxon>
        <taxon>Muroidea</taxon>
        <taxon>Muridae</taxon>
        <taxon>Murinae</taxon>
        <taxon>Rattus</taxon>
    </lineage>
</organism>